<protein>
    <recommendedName>
        <fullName>Anthranilate synthase component 1</fullName>
        <shortName>AS</shortName>
        <shortName>ASI</shortName>
        <ecNumber>4.1.3.27</ecNumber>
    </recommendedName>
</protein>
<gene>
    <name type="primary">trpE</name>
    <name type="ordered locus">NGO_0872</name>
</gene>
<sequence>MISKQEYQAQAAQGYNRIPLVQELLADLDTPLSLYLKLANRPYTYLLESVVGGERFGRYSFIGLPCSHYLKAGGKHVDVYQNGEIVEQYDGNPLPFIEAFHNRFKTPEIPSLPRFTGGLVGYFGYETVYNFEHFAHRLKNTAKANPLGTPDILLMLSQELAVIDNLSGKIHLIVYADPSQPDSYERARERLEDIRTQLRQSCAIPLSLGSKQTQAVSEFGEEPFKACVDKIKDYIFAGDCMQVVPSQRMSMEFTDNPLALYRALRTLNPSPYLFYYDFGDFHIVGSSPEILVRRERDDVIVRPIAGTRLRGKTPAEDLANEQDLLSDAKEIAEHVMLIDLGRNDVGRISKTGEVKVTDKMVIEKYSHVMHIVSNVEGCLKEGVTNMDILAATFPAGTLSGAPKVRAMEIIEEIEPEKRGIYGGAVGVWGFNNDMDLAIAIRTAVIKNNTLFIQSGAGVVADSDPTSEWQETQNKARAVVRAAQMVQEGLDK</sequence>
<proteinExistence type="inferred from homology"/>
<reference key="1">
    <citation type="journal article" date="1999" name="Mol. Microbiol.">
        <title>The opcA and (psi)opcB regions in Neisseria: genes, pseudogenes, deletions, insertion elements and DNA islands.</title>
        <authorList>
            <person name="Zhu P."/>
            <person name="Morelli G."/>
            <person name="Achtman M."/>
        </authorList>
    </citation>
    <scope>NUCLEOTIDE SEQUENCE [GENOMIC DNA]</scope>
</reference>
<reference key="2">
    <citation type="submission" date="2003-03" db="EMBL/GenBank/DDBJ databases">
        <title>The complete genome sequence of Neisseria gonorrhoeae.</title>
        <authorList>
            <person name="Lewis L.A."/>
            <person name="Gillaspy A.F."/>
            <person name="McLaughlin R.E."/>
            <person name="Gipson M."/>
            <person name="Ducey T.F."/>
            <person name="Ownbey T."/>
            <person name="Hartman K."/>
            <person name="Nydick C."/>
            <person name="Carson M.B."/>
            <person name="Vaughn J."/>
            <person name="Thomson C."/>
            <person name="Song L."/>
            <person name="Lin S."/>
            <person name="Yuan X."/>
            <person name="Najar F."/>
            <person name="Zhan M."/>
            <person name="Ren Q."/>
            <person name="Zhu H."/>
            <person name="Qi S."/>
            <person name="Kenton S.M."/>
            <person name="Lai H."/>
            <person name="White J.D."/>
            <person name="Clifton S."/>
            <person name="Roe B.A."/>
            <person name="Dyer D.W."/>
        </authorList>
    </citation>
    <scope>NUCLEOTIDE SEQUENCE [LARGE SCALE GENOMIC DNA]</scope>
    <source>
        <strain>ATCC 700825 / FA 1090</strain>
    </source>
</reference>
<name>TRPE_NEIG1</name>
<feature type="chain" id="PRO_0000154101" description="Anthranilate synthase component 1">
    <location>
        <begin position="1"/>
        <end position="491"/>
    </location>
</feature>
<feature type="binding site" evidence="2">
    <location>
        <position position="49"/>
    </location>
    <ligand>
        <name>L-tryptophan</name>
        <dbReference type="ChEBI" id="CHEBI:57912"/>
    </ligand>
</feature>
<feature type="binding site" evidence="2">
    <location>
        <begin position="271"/>
        <end position="273"/>
    </location>
    <ligand>
        <name>L-tryptophan</name>
        <dbReference type="ChEBI" id="CHEBI:57912"/>
    </ligand>
</feature>
<feature type="binding site" evidence="2">
    <location>
        <begin position="306"/>
        <end position="307"/>
    </location>
    <ligand>
        <name>chorismate</name>
        <dbReference type="ChEBI" id="CHEBI:29748"/>
    </ligand>
</feature>
<feature type="binding site" evidence="2">
    <location>
        <position position="333"/>
    </location>
    <ligand>
        <name>Mg(2+)</name>
        <dbReference type="ChEBI" id="CHEBI:18420"/>
    </ligand>
</feature>
<feature type="binding site" evidence="2">
    <location>
        <position position="421"/>
    </location>
    <ligand>
        <name>chorismate</name>
        <dbReference type="ChEBI" id="CHEBI:29748"/>
    </ligand>
</feature>
<feature type="binding site" evidence="2">
    <location>
        <position position="441"/>
    </location>
    <ligand>
        <name>chorismate</name>
        <dbReference type="ChEBI" id="CHEBI:29748"/>
    </ligand>
</feature>
<feature type="binding site" evidence="2">
    <location>
        <begin position="455"/>
        <end position="457"/>
    </location>
    <ligand>
        <name>chorismate</name>
        <dbReference type="ChEBI" id="CHEBI:29748"/>
    </ligand>
</feature>
<feature type="binding site" evidence="2">
    <location>
        <position position="457"/>
    </location>
    <ligand>
        <name>chorismate</name>
        <dbReference type="ChEBI" id="CHEBI:29748"/>
    </ligand>
</feature>
<feature type="binding site" evidence="2">
    <location>
        <position position="470"/>
    </location>
    <ligand>
        <name>Mg(2+)</name>
        <dbReference type="ChEBI" id="CHEBI:18420"/>
    </ligand>
</feature>
<organism>
    <name type="scientific">Neisseria gonorrhoeae (strain ATCC 700825 / FA 1090)</name>
    <dbReference type="NCBI Taxonomy" id="242231"/>
    <lineage>
        <taxon>Bacteria</taxon>
        <taxon>Pseudomonadati</taxon>
        <taxon>Pseudomonadota</taxon>
        <taxon>Betaproteobacteria</taxon>
        <taxon>Neisseriales</taxon>
        <taxon>Neisseriaceae</taxon>
        <taxon>Neisseria</taxon>
    </lineage>
</organism>
<evidence type="ECO:0000250" key="1"/>
<evidence type="ECO:0000250" key="2">
    <source>
        <dbReference type="UniProtKB" id="P00897"/>
    </source>
</evidence>
<evidence type="ECO:0000305" key="3"/>
<keyword id="KW-0028">Amino-acid biosynthesis</keyword>
<keyword id="KW-0057">Aromatic amino acid biosynthesis</keyword>
<keyword id="KW-0456">Lyase</keyword>
<keyword id="KW-0460">Magnesium</keyword>
<keyword id="KW-0479">Metal-binding</keyword>
<keyword id="KW-1185">Reference proteome</keyword>
<keyword id="KW-0822">Tryptophan biosynthesis</keyword>
<dbReference type="EC" id="4.1.3.27"/>
<dbReference type="EMBL" id="AJ242839">
    <property type="protein sequence ID" value="CAB45014.1"/>
    <property type="molecule type" value="Genomic_DNA"/>
</dbReference>
<dbReference type="EMBL" id="AE004969">
    <property type="protein sequence ID" value="AAW89573.1"/>
    <property type="molecule type" value="Genomic_DNA"/>
</dbReference>
<dbReference type="RefSeq" id="WP_010360232.1">
    <property type="nucleotide sequence ID" value="NC_002946.2"/>
</dbReference>
<dbReference type="RefSeq" id="YP_207985.1">
    <property type="nucleotide sequence ID" value="NC_002946.2"/>
</dbReference>
<dbReference type="SMR" id="Q5F8B4"/>
<dbReference type="STRING" id="242231.NGO_0872"/>
<dbReference type="GeneID" id="66753206"/>
<dbReference type="KEGG" id="ngo:NGO_0872"/>
<dbReference type="PATRIC" id="fig|242231.10.peg.1028"/>
<dbReference type="HOGENOM" id="CLU_006493_9_3_4"/>
<dbReference type="UniPathway" id="UPA00035">
    <property type="reaction ID" value="UER00040"/>
</dbReference>
<dbReference type="Proteomes" id="UP000000535">
    <property type="component" value="Chromosome"/>
</dbReference>
<dbReference type="GO" id="GO:0004049">
    <property type="term" value="F:anthranilate synthase activity"/>
    <property type="evidence" value="ECO:0007669"/>
    <property type="project" value="UniProtKB-EC"/>
</dbReference>
<dbReference type="GO" id="GO:0046872">
    <property type="term" value="F:metal ion binding"/>
    <property type="evidence" value="ECO:0007669"/>
    <property type="project" value="UniProtKB-KW"/>
</dbReference>
<dbReference type="GO" id="GO:0000162">
    <property type="term" value="P:L-tryptophan biosynthetic process"/>
    <property type="evidence" value="ECO:0007669"/>
    <property type="project" value="UniProtKB-UniPathway"/>
</dbReference>
<dbReference type="Gene3D" id="3.60.120.10">
    <property type="entry name" value="Anthranilate synthase"/>
    <property type="match status" value="1"/>
</dbReference>
<dbReference type="InterPro" id="IPR005801">
    <property type="entry name" value="ADC_synthase"/>
</dbReference>
<dbReference type="InterPro" id="IPR019999">
    <property type="entry name" value="Anth_synth_I-like"/>
</dbReference>
<dbReference type="InterPro" id="IPR006805">
    <property type="entry name" value="Anth_synth_I_N"/>
</dbReference>
<dbReference type="InterPro" id="IPR005256">
    <property type="entry name" value="Anth_synth_I_PabB"/>
</dbReference>
<dbReference type="InterPro" id="IPR015890">
    <property type="entry name" value="Chorismate_C"/>
</dbReference>
<dbReference type="NCBIfam" id="TIGR00564">
    <property type="entry name" value="trpE_most"/>
    <property type="match status" value="1"/>
</dbReference>
<dbReference type="PANTHER" id="PTHR11236">
    <property type="entry name" value="AMINOBENZOATE/ANTHRANILATE SYNTHASE"/>
    <property type="match status" value="1"/>
</dbReference>
<dbReference type="PANTHER" id="PTHR11236:SF48">
    <property type="entry name" value="ISOCHORISMATE SYNTHASE MENF"/>
    <property type="match status" value="1"/>
</dbReference>
<dbReference type="Pfam" id="PF04715">
    <property type="entry name" value="Anth_synt_I_N"/>
    <property type="match status" value="1"/>
</dbReference>
<dbReference type="Pfam" id="PF00425">
    <property type="entry name" value="Chorismate_bind"/>
    <property type="match status" value="1"/>
</dbReference>
<dbReference type="PRINTS" id="PR00095">
    <property type="entry name" value="ANTSNTHASEI"/>
</dbReference>
<dbReference type="SUPFAM" id="SSF56322">
    <property type="entry name" value="ADC synthase"/>
    <property type="match status" value="1"/>
</dbReference>
<accession>Q5F8B4</accession>
<comment type="function">
    <text evidence="1">Part of a heterotetrameric complex that catalyzes the two-step biosynthesis of anthranilate, an intermediate in the biosynthesis of L-tryptophan. In the first step, the glutamine-binding beta subunit (TrpG) of anthranilate synthase (AS) provides the glutamine amidotransferase activity which generates ammonia as a substrate that, along with chorismate, is used in the second step, catalyzed by the large alpha subunit of AS (TrpE) to produce anthranilate. In the absence of TrpG, TrpE can synthesize anthranilate directly from chorismate and high concentrations of ammonia (By similarity).</text>
</comment>
<comment type="catalytic activity">
    <reaction>
        <text>chorismate + L-glutamine = anthranilate + pyruvate + L-glutamate + H(+)</text>
        <dbReference type="Rhea" id="RHEA:21732"/>
        <dbReference type="ChEBI" id="CHEBI:15361"/>
        <dbReference type="ChEBI" id="CHEBI:15378"/>
        <dbReference type="ChEBI" id="CHEBI:16567"/>
        <dbReference type="ChEBI" id="CHEBI:29748"/>
        <dbReference type="ChEBI" id="CHEBI:29985"/>
        <dbReference type="ChEBI" id="CHEBI:58359"/>
        <dbReference type="EC" id="4.1.3.27"/>
    </reaction>
</comment>
<comment type="cofactor">
    <cofactor evidence="2">
        <name>Mg(2+)</name>
        <dbReference type="ChEBI" id="CHEBI:18420"/>
    </cofactor>
    <text evidence="2">Binds 1 Mg(2+) ion per subunit.</text>
</comment>
<comment type="activity regulation">
    <text evidence="1">Feedback inhibited by tryptophan.</text>
</comment>
<comment type="pathway">
    <text>Amino-acid biosynthesis; L-tryptophan biosynthesis; L-tryptophan from chorismate: step 1/5.</text>
</comment>
<comment type="subunit">
    <text evidence="1">Heterotetramer consisting of two non-identical subunits: a beta subunit (TrpG) and a large alpha subunit (TrpE).</text>
</comment>
<comment type="similarity">
    <text evidence="3">Belongs to the anthranilate synthase component I family.</text>
</comment>